<gene>
    <name type="primary">meis3-b</name>
</gene>
<protein>
    <recommendedName>
        <fullName evidence="1">Homeobox protein meis3-B</fullName>
    </recommendedName>
</protein>
<evidence type="ECO:0000250" key="1">
    <source>
        <dbReference type="UniProtKB" id="Q5U4X3"/>
    </source>
</evidence>
<evidence type="ECO:0000255" key="2"/>
<evidence type="ECO:0000255" key="3">
    <source>
        <dbReference type="PROSITE-ProRule" id="PRU00108"/>
    </source>
</evidence>
<evidence type="ECO:0000256" key="4">
    <source>
        <dbReference type="SAM" id="MobiDB-lite"/>
    </source>
</evidence>
<evidence type="ECO:0000305" key="5"/>
<evidence type="ECO:0000312" key="6">
    <source>
        <dbReference type="EMBL" id="AAH44024.1"/>
    </source>
</evidence>
<evidence type="ECO:0000312" key="7">
    <source>
        <dbReference type="EMBL" id="AAI08489.1"/>
    </source>
</evidence>
<dbReference type="EMBL" id="BC044024">
    <property type="protein sequence ID" value="AAH44024.1"/>
    <property type="molecule type" value="mRNA"/>
</dbReference>
<dbReference type="EMBL" id="BC108488">
    <property type="protein sequence ID" value="AAI08489.1"/>
    <property type="molecule type" value="mRNA"/>
</dbReference>
<dbReference type="RefSeq" id="NP_001079532.1">
    <property type="nucleotide sequence ID" value="NM_001086063.1"/>
</dbReference>
<dbReference type="SMR" id="Q7ZY13"/>
<dbReference type="DNASU" id="379219"/>
<dbReference type="GeneID" id="379219"/>
<dbReference type="KEGG" id="xla:379219"/>
<dbReference type="AGR" id="Xenbase:XB-GENE-485341"/>
<dbReference type="CTD" id="379219"/>
<dbReference type="Xenbase" id="XB-GENE-485341">
    <property type="gene designation" value="meis3.S"/>
</dbReference>
<dbReference type="OrthoDB" id="10056939at2759"/>
<dbReference type="Proteomes" id="UP000186698">
    <property type="component" value="Chromosome 8S"/>
</dbReference>
<dbReference type="Bgee" id="379219">
    <property type="expression patterns" value="Expressed in neurula embryo and 13 other cell types or tissues"/>
</dbReference>
<dbReference type="GO" id="GO:0005737">
    <property type="term" value="C:cytoplasm"/>
    <property type="evidence" value="ECO:0000250"/>
    <property type="project" value="UniProtKB"/>
</dbReference>
<dbReference type="GO" id="GO:0005634">
    <property type="term" value="C:nucleus"/>
    <property type="evidence" value="ECO:0000250"/>
    <property type="project" value="UniProtKB"/>
</dbReference>
<dbReference type="GO" id="GO:0003677">
    <property type="term" value="F:DNA binding"/>
    <property type="evidence" value="ECO:0000250"/>
    <property type="project" value="UniProtKB"/>
</dbReference>
<dbReference type="GO" id="GO:0001228">
    <property type="term" value="F:DNA-binding transcription activator activity, RNA polymerase II-specific"/>
    <property type="evidence" value="ECO:0000318"/>
    <property type="project" value="GO_Central"/>
</dbReference>
<dbReference type="GO" id="GO:0001525">
    <property type="term" value="P:angiogenesis"/>
    <property type="evidence" value="ECO:0000318"/>
    <property type="project" value="GO_Central"/>
</dbReference>
<dbReference type="GO" id="GO:0009887">
    <property type="term" value="P:animal organ morphogenesis"/>
    <property type="evidence" value="ECO:0000318"/>
    <property type="project" value="GO_Central"/>
</dbReference>
<dbReference type="GO" id="GO:0009952">
    <property type="term" value="P:anterior/posterior pattern specification"/>
    <property type="evidence" value="ECO:0000250"/>
    <property type="project" value="UniProtKB"/>
</dbReference>
<dbReference type="GO" id="GO:0007420">
    <property type="term" value="P:brain development"/>
    <property type="evidence" value="ECO:0000318"/>
    <property type="project" value="GO_Central"/>
</dbReference>
<dbReference type="GO" id="GO:0007417">
    <property type="term" value="P:central nervous system development"/>
    <property type="evidence" value="ECO:0000250"/>
    <property type="project" value="UniProtKB"/>
</dbReference>
<dbReference type="GO" id="GO:0009880">
    <property type="term" value="P:embryonic pattern specification"/>
    <property type="evidence" value="ECO:0000318"/>
    <property type="project" value="GO_Central"/>
</dbReference>
<dbReference type="GO" id="GO:0001654">
    <property type="term" value="P:eye development"/>
    <property type="evidence" value="ECO:0000318"/>
    <property type="project" value="GO_Central"/>
</dbReference>
<dbReference type="GO" id="GO:0030097">
    <property type="term" value="P:hemopoiesis"/>
    <property type="evidence" value="ECO:0000318"/>
    <property type="project" value="GO_Central"/>
</dbReference>
<dbReference type="GO" id="GO:0030902">
    <property type="term" value="P:hindbrain development"/>
    <property type="evidence" value="ECO:0000250"/>
    <property type="project" value="UniProtKB"/>
</dbReference>
<dbReference type="GO" id="GO:0008284">
    <property type="term" value="P:positive regulation of cell population proliferation"/>
    <property type="evidence" value="ECO:0000318"/>
    <property type="project" value="GO_Central"/>
</dbReference>
<dbReference type="GO" id="GO:0045893">
    <property type="term" value="P:positive regulation of DNA-templated transcription"/>
    <property type="evidence" value="ECO:0000250"/>
    <property type="project" value="UniProtKB"/>
</dbReference>
<dbReference type="GO" id="GO:0043410">
    <property type="term" value="P:positive regulation of MAPK cascade"/>
    <property type="evidence" value="ECO:0000250"/>
    <property type="project" value="UniProtKB"/>
</dbReference>
<dbReference type="GO" id="GO:0045944">
    <property type="term" value="P:positive regulation of transcription by RNA polymerase II"/>
    <property type="evidence" value="ECO:0000250"/>
    <property type="project" value="UniProtKB"/>
</dbReference>
<dbReference type="CDD" id="cd00086">
    <property type="entry name" value="homeodomain"/>
    <property type="match status" value="1"/>
</dbReference>
<dbReference type="FunFam" id="1.10.10.60:FF:000004">
    <property type="entry name" value="Meis2 homeobox isoform 2c"/>
    <property type="match status" value="1"/>
</dbReference>
<dbReference type="Gene3D" id="1.10.10.60">
    <property type="entry name" value="Homeodomain-like"/>
    <property type="match status" value="1"/>
</dbReference>
<dbReference type="InterPro" id="IPR001356">
    <property type="entry name" value="HD"/>
</dbReference>
<dbReference type="InterPro" id="IPR009057">
    <property type="entry name" value="Homeodomain-like_sf"/>
</dbReference>
<dbReference type="InterPro" id="IPR008422">
    <property type="entry name" value="KN_HD"/>
</dbReference>
<dbReference type="InterPro" id="IPR032453">
    <property type="entry name" value="PKNOX/Meis_N"/>
</dbReference>
<dbReference type="InterPro" id="IPR050224">
    <property type="entry name" value="TALE_homeobox"/>
</dbReference>
<dbReference type="PANTHER" id="PTHR11850">
    <property type="entry name" value="HOMEOBOX PROTEIN TRANSCRIPTION FACTORS"/>
    <property type="match status" value="1"/>
</dbReference>
<dbReference type="Pfam" id="PF05920">
    <property type="entry name" value="Homeobox_KN"/>
    <property type="match status" value="1"/>
</dbReference>
<dbReference type="Pfam" id="PF16493">
    <property type="entry name" value="Meis_PKNOX_N"/>
    <property type="match status" value="1"/>
</dbReference>
<dbReference type="SMART" id="SM00389">
    <property type="entry name" value="HOX"/>
    <property type="match status" value="1"/>
</dbReference>
<dbReference type="SUPFAM" id="SSF46689">
    <property type="entry name" value="Homeodomain-like"/>
    <property type="match status" value="1"/>
</dbReference>
<dbReference type="PROSITE" id="PS50071">
    <property type="entry name" value="HOMEOBOX_2"/>
    <property type="match status" value="1"/>
</dbReference>
<sequence length="451" mass="48969">MAQRYDEMVHYPGLDGMSLAGFADAHTGRALQHHSLSQSTPYGSTGAAHRVPMPPGMGSNDGLKREKDEIYGHPLFPLLALVFEKCELATCSPRDNSGSFPGGDVCSSDSFNEDIAVFAKQVRTEKPLFSSNPELDNLMIQAIQVLRFHLLELEKVHDLCDNFCHRYITCLKGKMPIDLVIDDRDGSSKSDLEDFTGSCTSLSDQNNTWIRDHDETGSTHSGTPGPSSGGLASQSGDNSSEQGDCMDNSVASPSTGDDDDLDRDKKRNKKRGIFPKVATNIMRAWLFQHLSHPYPSEEQKKQLAQDTGLTILQVNNWFINARRRIVQPMIDQSNRTGQGGAPYSPDGQNMGGYVMDGQQHMGIRPPGFQGIPGDYTAAPSTMPMGFPPAGYTPAIPPHSAGLRHGPSLHSYLPGHPHSMILPAGASPHHLVSAQSPADALLNGQNIDIHAH</sequence>
<organism>
    <name type="scientific">Xenopus laevis</name>
    <name type="common">African clawed frog</name>
    <dbReference type="NCBI Taxonomy" id="8355"/>
    <lineage>
        <taxon>Eukaryota</taxon>
        <taxon>Metazoa</taxon>
        <taxon>Chordata</taxon>
        <taxon>Craniata</taxon>
        <taxon>Vertebrata</taxon>
        <taxon>Euteleostomi</taxon>
        <taxon>Amphibia</taxon>
        <taxon>Batrachia</taxon>
        <taxon>Anura</taxon>
        <taxon>Pipoidea</taxon>
        <taxon>Pipidae</taxon>
        <taxon>Xenopodinae</taxon>
        <taxon>Xenopus</taxon>
        <taxon>Xenopus</taxon>
    </lineage>
</organism>
<proteinExistence type="evidence at transcript level"/>
<feature type="chain" id="PRO_0000355572" description="Homeobox protein meis3-B">
    <location>
        <begin position="1"/>
        <end position="451"/>
    </location>
</feature>
<feature type="domain" description="MEIS N-terminal" evidence="2">
    <location>
        <begin position="102"/>
        <end position="185"/>
    </location>
</feature>
<feature type="DNA-binding region" description="Homeobox" evidence="3">
    <location>
        <begin position="267"/>
        <end position="329"/>
    </location>
</feature>
<feature type="region of interest" description="Disordered" evidence="4">
    <location>
        <begin position="33"/>
        <end position="64"/>
    </location>
</feature>
<feature type="region of interest" description="Disordered" evidence="4">
    <location>
        <begin position="206"/>
        <end position="272"/>
    </location>
</feature>
<feature type="compositionally biased region" description="Polar residues" evidence="4">
    <location>
        <begin position="34"/>
        <end position="43"/>
    </location>
</feature>
<feature type="compositionally biased region" description="Low complexity" evidence="4">
    <location>
        <begin position="218"/>
        <end position="230"/>
    </location>
</feature>
<feature type="compositionally biased region" description="Polar residues" evidence="4">
    <location>
        <begin position="231"/>
        <end position="242"/>
    </location>
</feature>
<feature type="sequence conflict" description="In Ref. 1; AAH44024." evidence="5" ref="1">
    <original>D</original>
    <variation>G</variation>
    <location>
        <position position="346"/>
    </location>
</feature>
<keyword id="KW-0010">Activator</keyword>
<keyword id="KW-0217">Developmental protein</keyword>
<keyword id="KW-0221">Differentiation</keyword>
<keyword id="KW-0238">DNA-binding</keyword>
<keyword id="KW-0371">Homeobox</keyword>
<keyword id="KW-0524">Neurogenesis</keyword>
<keyword id="KW-0539">Nucleus</keyword>
<keyword id="KW-1185">Reference proteome</keyword>
<keyword id="KW-0804">Transcription</keyword>
<keyword id="KW-0805">Transcription regulation</keyword>
<reference evidence="6" key="1">
    <citation type="submission" date="2005-11" db="EMBL/GenBank/DDBJ databases">
        <authorList>
            <consortium name="NIH - Xenopus Gene Collection (XGC) project"/>
        </authorList>
    </citation>
    <scope>NUCLEOTIDE SEQUENCE [LARGE SCALE MRNA]</scope>
    <source>
        <tissue evidence="7">Neurula</tissue>
        <tissue evidence="6">Tail bud</tissue>
    </source>
</reference>
<accession>Q7ZY13</accession>
<accession>Q2VPN5</accession>
<comment type="function">
    <text evidence="1">A caudalizing protein which is required to pattern the anterior/posterior (A/P) axis during central nervous system (CNS) formation. Inhibits anterior neural expression and acts as a transcriptional activator to induce posterior neural gene expression. Maintains a proper A/P balance required for hindbrain formation by activating the FGF/MAPK pathway, which modulates the planar cell polarity (PCP) pathway. Interacts with retinoid signaling during hindbrain patterning (By similarity).</text>
</comment>
<comment type="subcellular location">
    <subcellularLocation>
        <location evidence="2 5">Nucleus</location>
    </subcellularLocation>
</comment>
<comment type="similarity">
    <text evidence="2">Belongs to the TALE/MEIS homeobox family.</text>
</comment>
<name>MEI3B_XENLA</name>